<comment type="function">
    <text evidence="2 8">Component of the volatile terpenes biosynthesis pathways (Probable). Sesquiterpene synthase that converts farnesyl diphosphate to (E)-beta-caryophyllene (By similarity). Involved in indirect defense by producing volatile signals attracting natural enemies of herbivores (By similarity).</text>
</comment>
<comment type="catalytic activity">
    <reaction evidence="2">
        <text>(2E,6E)-farnesyl diphosphate = (-)-(E)-beta-caryophyllene + diphosphate</text>
        <dbReference type="Rhea" id="RHEA:28294"/>
        <dbReference type="ChEBI" id="CHEBI:10357"/>
        <dbReference type="ChEBI" id="CHEBI:33019"/>
        <dbReference type="ChEBI" id="CHEBI:175763"/>
        <dbReference type="EC" id="4.2.3.57"/>
    </reaction>
    <physiologicalReaction direction="left-to-right" evidence="2">
        <dbReference type="Rhea" id="RHEA:28295"/>
    </physiologicalReaction>
</comment>
<comment type="cofactor">
    <cofactor evidence="2">
        <name>Mg(2+)</name>
        <dbReference type="ChEBI" id="CHEBI:18420"/>
    </cofactor>
    <cofactor evidence="2">
        <name>Mn(2+)</name>
        <dbReference type="ChEBI" id="CHEBI:29035"/>
    </cofactor>
    <text evidence="4">Binds 3 Mg(2+) or Mn(2+) ions per subunit.</text>
</comment>
<comment type="pathway">
    <text evidence="7">Secondary metabolite biosynthesis; terpenoid biosynthesis.</text>
</comment>
<comment type="subunit">
    <text evidence="5">Monomer.</text>
</comment>
<comment type="subcellular location">
    <subcellularLocation>
        <location evidence="6">Cytoplasm</location>
    </subcellularLocation>
</comment>
<comment type="domain">
    <text evidence="1">The Asp-Asp-Xaa-Xaa-Asp/Glu (DDXXD/E) motif is important for the catalytic activity, presumably through binding to Mg(2+).</text>
</comment>
<comment type="similarity">
    <text evidence="8">Belongs to the terpene synthase family.</text>
</comment>
<evidence type="ECO:0000250" key="1">
    <source>
        <dbReference type="UniProtKB" id="A0A1C9J6A7"/>
    </source>
</evidence>
<evidence type="ECO:0000250" key="2">
    <source>
        <dbReference type="UniProtKB" id="B2C4D0"/>
    </source>
</evidence>
<evidence type="ECO:0000250" key="3">
    <source>
        <dbReference type="UniProtKB" id="Q40577"/>
    </source>
</evidence>
<evidence type="ECO:0000250" key="4">
    <source>
        <dbReference type="UniProtKB" id="Q5GJ60"/>
    </source>
</evidence>
<evidence type="ECO:0000250" key="5">
    <source>
        <dbReference type="UniProtKB" id="Q6JD73"/>
    </source>
</evidence>
<evidence type="ECO:0000250" key="6">
    <source>
        <dbReference type="UniProtKB" id="Q6Q3H2"/>
    </source>
</evidence>
<evidence type="ECO:0000250" key="7">
    <source>
        <dbReference type="UniProtKB" id="Q84ZW8"/>
    </source>
</evidence>
<evidence type="ECO:0000305" key="8"/>
<evidence type="ECO:0000312" key="9">
    <source>
        <dbReference type="EMBL" id="PWZ45177.1"/>
    </source>
</evidence>
<organism>
    <name type="scientific">Zea mays</name>
    <name type="common">Maize</name>
    <dbReference type="NCBI Taxonomy" id="4577"/>
    <lineage>
        <taxon>Eukaryota</taxon>
        <taxon>Viridiplantae</taxon>
        <taxon>Streptophyta</taxon>
        <taxon>Embryophyta</taxon>
        <taxon>Tracheophyta</taxon>
        <taxon>Spermatophyta</taxon>
        <taxon>Magnoliopsida</taxon>
        <taxon>Liliopsida</taxon>
        <taxon>Poales</taxon>
        <taxon>Poaceae</taxon>
        <taxon>PACMAD clade</taxon>
        <taxon>Panicoideae</taxon>
        <taxon>Andropogonodae</taxon>
        <taxon>Andropogoneae</taxon>
        <taxon>Tripsacinae</taxon>
        <taxon>Zea</taxon>
    </lineage>
</organism>
<protein>
    <recommendedName>
        <fullName evidence="2">(E)-beta-caryophyllene synthase</fullName>
        <ecNumber evidence="2">4.2.3.57</ecNumber>
    </recommendedName>
    <alternativeName>
        <fullName evidence="2">Terpene synthase 23</fullName>
    </alternativeName>
</protein>
<dbReference type="EC" id="4.2.3.57" evidence="2"/>
<dbReference type="EMBL" id="NCVQ01000002">
    <property type="protein sequence ID" value="PWZ45177.1"/>
    <property type="molecule type" value="Genomic_DNA"/>
</dbReference>
<dbReference type="SMR" id="A0A3L6G998"/>
<dbReference type="STRING" id="4577.A0A3L6G998"/>
<dbReference type="MaizeGDB" id="1204229"/>
<dbReference type="InParanoid" id="A0A3L6G998"/>
<dbReference type="UniPathway" id="UPA00213"/>
<dbReference type="Proteomes" id="UP000007305">
    <property type="component" value="Unplaced"/>
</dbReference>
<dbReference type="Proteomes" id="UP000251960">
    <property type="component" value="Chromosome 10"/>
</dbReference>
<dbReference type="ExpressionAtlas" id="A0A3L6G998">
    <property type="expression patterns" value="baseline and differential"/>
</dbReference>
<dbReference type="GO" id="GO:0005737">
    <property type="term" value="C:cytoplasm"/>
    <property type="evidence" value="ECO:0007669"/>
    <property type="project" value="UniProtKB-SubCell"/>
</dbReference>
<dbReference type="GO" id="GO:0080016">
    <property type="term" value="F:(-)-E-beta-caryophyllene synthase activity"/>
    <property type="evidence" value="ECO:0007669"/>
    <property type="project" value="UniProtKB-EC"/>
</dbReference>
<dbReference type="GO" id="GO:0000287">
    <property type="term" value="F:magnesium ion binding"/>
    <property type="evidence" value="ECO:0007669"/>
    <property type="project" value="InterPro"/>
</dbReference>
<dbReference type="GO" id="GO:0006952">
    <property type="term" value="P:defense response"/>
    <property type="evidence" value="ECO:0007669"/>
    <property type="project" value="UniProtKB-KW"/>
</dbReference>
<dbReference type="GO" id="GO:0016102">
    <property type="term" value="P:diterpenoid biosynthetic process"/>
    <property type="evidence" value="ECO:0007669"/>
    <property type="project" value="InterPro"/>
</dbReference>
<dbReference type="CDD" id="cd00684">
    <property type="entry name" value="Terpene_cyclase_plant_C1"/>
    <property type="match status" value="1"/>
</dbReference>
<dbReference type="FunFam" id="1.10.600.10:FF:000007">
    <property type="entry name" value="Isoprene synthase, chloroplastic"/>
    <property type="match status" value="1"/>
</dbReference>
<dbReference type="Gene3D" id="1.10.600.10">
    <property type="entry name" value="Farnesyl Diphosphate Synthase"/>
    <property type="match status" value="1"/>
</dbReference>
<dbReference type="Gene3D" id="1.50.10.130">
    <property type="entry name" value="Terpene synthase, N-terminal domain"/>
    <property type="match status" value="1"/>
</dbReference>
<dbReference type="InterPro" id="IPR008949">
    <property type="entry name" value="Isoprenoid_synthase_dom_sf"/>
</dbReference>
<dbReference type="InterPro" id="IPR034741">
    <property type="entry name" value="Terpene_cyclase-like_1_C"/>
</dbReference>
<dbReference type="InterPro" id="IPR044814">
    <property type="entry name" value="Terpene_cyclase_plant_C1"/>
</dbReference>
<dbReference type="InterPro" id="IPR001906">
    <property type="entry name" value="Terpene_synth_N"/>
</dbReference>
<dbReference type="InterPro" id="IPR036965">
    <property type="entry name" value="Terpene_synth_N_sf"/>
</dbReference>
<dbReference type="InterPro" id="IPR050148">
    <property type="entry name" value="Terpene_synthase-like"/>
</dbReference>
<dbReference type="InterPro" id="IPR005630">
    <property type="entry name" value="Terpene_synthase_metal-bd"/>
</dbReference>
<dbReference type="InterPro" id="IPR008930">
    <property type="entry name" value="Terpenoid_cyclase/PrenylTrfase"/>
</dbReference>
<dbReference type="PANTHER" id="PTHR31225:SF158">
    <property type="entry name" value="(E)-BETA-CARYOPHYLLENE SYNTHASE"/>
    <property type="match status" value="1"/>
</dbReference>
<dbReference type="PANTHER" id="PTHR31225">
    <property type="entry name" value="OS04G0344100 PROTEIN-RELATED"/>
    <property type="match status" value="1"/>
</dbReference>
<dbReference type="Pfam" id="PF01397">
    <property type="entry name" value="Terpene_synth"/>
    <property type="match status" value="1"/>
</dbReference>
<dbReference type="Pfam" id="PF03936">
    <property type="entry name" value="Terpene_synth_C"/>
    <property type="match status" value="1"/>
</dbReference>
<dbReference type="SFLD" id="SFLDS00005">
    <property type="entry name" value="Isoprenoid_Synthase_Type_I"/>
    <property type="match status" value="1"/>
</dbReference>
<dbReference type="SFLD" id="SFLDG01019">
    <property type="entry name" value="Terpene_Cyclase_Like_1_C_Termi"/>
    <property type="match status" value="1"/>
</dbReference>
<dbReference type="SUPFAM" id="SSF48239">
    <property type="entry name" value="Terpenoid cyclases/Protein prenyltransferases"/>
    <property type="match status" value="1"/>
</dbReference>
<dbReference type="SUPFAM" id="SSF48576">
    <property type="entry name" value="Terpenoid synthases"/>
    <property type="match status" value="1"/>
</dbReference>
<gene>
    <name evidence="2" type="primary">TPS23</name>
    <name evidence="9" type="ORF">Zm00014a_002860</name>
</gene>
<keyword id="KW-0963">Cytoplasm</keyword>
<keyword id="KW-0456">Lyase</keyword>
<keyword id="KW-0460">Magnesium</keyword>
<keyword id="KW-0464">Manganese</keyword>
<keyword id="KW-0479">Metal-binding</keyword>
<keyword id="KW-0611">Plant defense</keyword>
<keyword id="KW-1185">Reference proteome</keyword>
<accession>A0A3L6G998</accession>
<sequence length="547" mass="63483">MAADEARSVSRLHSEEDMHGKHHSTLWGDFFLHHVPCRPGQYSIMKDNVKIMKEEVKKMLLDVGSSDLSHKLECIDTLERLGLDYHYTKEIDELMCNVFEARDQDLDLTTTSQLFYLLRKHGYHVSSDVFLKFGDDKGDIVTDDARCLLRMYEAAHVRVNGEEILDNILIHTKRQLQCIVDDLEPTLQEEVRYALETPLFRRLNRVQARQFISTYEKSTTRNNMLLEFSKLDFNILLTLYCEELKDLTMWWKEFQAQANTAIYARDRMVEMHFWMMGVFFEPQYSYSRKMLTQLFMIVSVLDDLYDSHCTTEEGNAFTAALQRWDEEGVEQCPTYLRTLYTNIRATVKAIEEDLNLQNNKHAKLVKGLIIDMAMCYNAETEWRDKKYVPATVDEHLKISARSSGCMHLVSQGFISMGDVATSEALEWASTYPKIVRAVCIIARLANDIMSYKREASNNTMVSTVQTCAKEYGTTTVEQAIEKIRELIEEAWMDITHECLRQPQPMALLERAVNLARTMDFLYKDVDGYTDSRSIKGILDSLYVDIID</sequence>
<feature type="chain" id="PRO_0000447522" description="(E)-beta-caryophyllene synthase">
    <location>
        <begin position="1"/>
        <end position="547"/>
    </location>
</feature>
<feature type="short sequence motif" description="DDXXD motif" evidence="1">
    <location>
        <begin position="302"/>
        <end position="306"/>
    </location>
</feature>
<feature type="binding site" evidence="3">
    <location>
        <position position="302"/>
    </location>
    <ligand>
        <name>Mg(2+)</name>
        <dbReference type="ChEBI" id="CHEBI:18420"/>
        <label>1</label>
    </ligand>
</feature>
<feature type="binding site" evidence="3">
    <location>
        <position position="302"/>
    </location>
    <ligand>
        <name>Mg(2+)</name>
        <dbReference type="ChEBI" id="CHEBI:18420"/>
        <label>2</label>
    </ligand>
</feature>
<feature type="binding site" evidence="1">
    <location>
        <position position="302"/>
    </location>
    <ligand>
        <name>substrate</name>
    </ligand>
</feature>
<feature type="binding site" evidence="3">
    <location>
        <position position="306"/>
    </location>
    <ligand>
        <name>Mg(2+)</name>
        <dbReference type="ChEBI" id="CHEBI:18420"/>
        <label>1</label>
    </ligand>
</feature>
<feature type="binding site" evidence="3">
    <location>
        <position position="306"/>
    </location>
    <ligand>
        <name>Mg(2+)</name>
        <dbReference type="ChEBI" id="CHEBI:18420"/>
        <label>2</label>
    </ligand>
</feature>
<feature type="binding site" evidence="1">
    <location>
        <position position="306"/>
    </location>
    <ligand>
        <name>substrate</name>
    </ligand>
</feature>
<feature type="binding site" evidence="1">
    <location>
        <position position="443"/>
    </location>
    <ligand>
        <name>substrate</name>
    </ligand>
</feature>
<feature type="binding site" evidence="3">
    <location>
        <position position="446"/>
    </location>
    <ligand>
        <name>Mg(2+)</name>
        <dbReference type="ChEBI" id="CHEBI:18420"/>
        <label>3</label>
    </ligand>
</feature>
<feature type="binding site" evidence="1">
    <location>
        <position position="446"/>
    </location>
    <ligand>
        <name>substrate</name>
    </ligand>
</feature>
<feature type="binding site" evidence="3">
    <location>
        <position position="454"/>
    </location>
    <ligand>
        <name>Mg(2+)</name>
        <dbReference type="ChEBI" id="CHEBI:18420"/>
        <label>3</label>
    </ligand>
</feature>
<reference key="1">
    <citation type="journal article" date="2018" name="Nat. Genet.">
        <title>Extensive intraspecific gene order and gene structural variations between Mo17 and other maize genomes.</title>
        <authorList>
            <person name="Sun S."/>
            <person name="Zhou Y."/>
            <person name="Chen J."/>
            <person name="Shi J."/>
            <person name="Zhao H."/>
            <person name="Zhao H."/>
            <person name="Song W."/>
            <person name="Zhang M."/>
            <person name="Cui Y."/>
            <person name="Dong X."/>
            <person name="Liu H."/>
            <person name="Ma X."/>
            <person name="Jiao Y."/>
            <person name="Wang B."/>
            <person name="Wei X."/>
            <person name="Stein J.C."/>
            <person name="Glaubitz J.C."/>
            <person name="Lu F."/>
            <person name="Yu G."/>
            <person name="Liang C."/>
            <person name="Fengler K."/>
            <person name="Li B."/>
            <person name="Rafalski A."/>
            <person name="Schnable P.S."/>
            <person name="Ware D.H."/>
            <person name="Buckler E.S."/>
            <person name="Lai J."/>
        </authorList>
    </citation>
    <scope>NUCLEOTIDE SEQUENCE [LARGE SCALE GENOMIC DNA]</scope>
    <source>
        <strain>cv. Missouri 17</strain>
        <tissue>Seedling</tissue>
    </source>
</reference>
<proteinExistence type="inferred from homology"/>
<name>TS23M_MAIZE</name>